<comment type="function">
    <text evidence="3 5 6 7">V region of the variable domain of T cell receptor (TR) alpha chain that participates in the antigen recognition (PubMed:24600447). Alpha-beta T cell receptors are antigen specific receptors which are essential to the immune response and are present on the cell surface of T lymphocytes. Recognize peptide-major histocompatibility (MH) (pMH) complexes that are displayed by antigen presenting cells (APC), a prerequisite for efficient T cell adaptive immunity against pathogens (PubMed:25493333). Binding of alpha-beta TR to pMH complex initiates TR-CD3 clustering on the cell surface and intracellular activation of LCK that phosphorylates the ITAM motifs of CD3G, CD3D, CD3E and CD247 enabling the recruitment of ZAP70. In turn ZAP70 phosphorylates LAT, which recruits numerous signaling molecules to form the LAT signalosome. The LAT signalosome propagates signal branching to three major signaling pathways, the calcium, the mitogen-activated protein kinase (MAPK) kinase and the nuclear factor NF-kappa-B (NF-kB) pathways, leading to the mobilization of transcription factors that are critical for gene expression and essential for T cell growth and differentiation (PubMed:23524462). The T cell repertoire is generated in the thymus, by V-(D)-J rearrangement. This repertoire is then shaped by intrathymic selection events to generate a peripheral T cell pool of self-MH restricted, non-autoaggressive T cells. Post-thymic interaction of alpha-beta TR with the pMH complexes shapes TR structural and functional avidity (PubMed:15040585).</text>
</comment>
<comment type="subunit">
    <text evidence="4">Alpha-beta TR is a heterodimer composed of an alpha and beta chain; disulfide-linked. The alpha-beta TR is associated with the transmembrane signaling CD3 coreceptor proteins to form the TR-CD3 (TcR or TCR). The assembly of alpha-beta TR heterodimers with CD3 occurs in the endoplasmic reticulum where a single alpha-beta TR heterodimer associates with one CD3D-CD3E heterodimer, one CD3G-CD3E heterodimer and one CD247 homodimer forming a stable octameric structure. CD3D-CD3E and CD3G-CD3E heterodimers preferentially associate with TR alpha and TR beta chains, respectively. The association of the CD247 homodimer is the last step of TcR assembly in the endoplasmic reticulum and is required for transport to the cell surface.</text>
</comment>
<comment type="subcellular location">
    <subcellularLocation>
        <location evidence="4">Cell membrane</location>
    </subcellularLocation>
</comment>
<comment type="polymorphism">
    <text evidence="9">There are several alleles. The sequence shown is that of IMGT allele TRAV41*01.</text>
</comment>
<gene>
    <name evidence="8" type="primary">TRAV41</name>
</gene>
<protein>
    <recommendedName>
        <fullName evidence="8">T cell receptor alpha variable 41</fullName>
    </recommendedName>
</protein>
<sequence>MVKIRQFLLAILWLQLSCVSAAKNEVEQSPQNLTAQEGEFITINCSYSVGISALHWLQQHPGGGIVSLFMLSSGKKKHGRLIATINIQEKHSSLHITASHPRDSAVYICAVR</sequence>
<dbReference type="EMBL" id="AC245470">
    <property type="status" value="NOT_ANNOTATED_CDS"/>
    <property type="molecule type" value="Genomic_DNA"/>
</dbReference>
<dbReference type="SMR" id="A0A0B4J266"/>
<dbReference type="FunCoup" id="A0A0B4J266">
    <property type="interactions" value="328"/>
</dbReference>
<dbReference type="IMGT_GENE-DB" id="TRAV41"/>
<dbReference type="GlyCosmos" id="A0A0B4J266">
    <property type="glycosylation" value="2 sites, No reported glycans"/>
</dbReference>
<dbReference type="GlyGen" id="A0A0B4J266">
    <property type="glycosylation" value="2 sites"/>
</dbReference>
<dbReference type="BioMuta" id="TRAV41"/>
<dbReference type="Ensembl" id="ENST00000390468.1">
    <property type="protein sequence ID" value="ENSP00000451177.1"/>
    <property type="gene ID" value="ENSG00000211820.1"/>
</dbReference>
<dbReference type="AGR" id="HGNC:12142"/>
<dbReference type="GeneCards" id="TRAV41"/>
<dbReference type="HGNC" id="HGNC:12142">
    <property type="gene designation" value="TRAV41"/>
</dbReference>
<dbReference type="HPA" id="ENSG00000211820">
    <property type="expression patterns" value="Tissue enriched (lymphoid)"/>
</dbReference>
<dbReference type="neXtProt" id="NX_A0A0B4J266"/>
<dbReference type="OpenTargets" id="ENSG00000211820"/>
<dbReference type="VEuPathDB" id="HostDB:ENSG00000211820"/>
<dbReference type="GeneTree" id="ENSGT00900000140957"/>
<dbReference type="HOGENOM" id="CLU_077975_8_3_1"/>
<dbReference type="InParanoid" id="A0A0B4J266"/>
<dbReference type="OMA" id="MTALHWL"/>
<dbReference type="OrthoDB" id="9803478at2759"/>
<dbReference type="PAN-GO" id="A0A0B4J266">
    <property type="GO annotations" value="0 GO annotations based on evolutionary models"/>
</dbReference>
<dbReference type="PhylomeDB" id="A0A0B4J266"/>
<dbReference type="SignaLink" id="A0A0B4J266"/>
<dbReference type="ChiTaRS" id="TRAV41">
    <property type="organism name" value="human"/>
</dbReference>
<dbReference type="Pharos" id="A0A0B4J266">
    <property type="development level" value="Tdark"/>
</dbReference>
<dbReference type="PRO" id="PR:A0A0B4J266"/>
<dbReference type="Proteomes" id="UP000005640">
    <property type="component" value="Chromosome 14"/>
</dbReference>
<dbReference type="RNAct" id="A0A0B4J266">
    <property type="molecule type" value="protein"/>
</dbReference>
<dbReference type="Bgee" id="ENSG00000211820">
    <property type="expression patterns" value="Expressed in lymph node and 80 other cell types or tissues"/>
</dbReference>
<dbReference type="GO" id="GO:0042101">
    <property type="term" value="C:T cell receptor complex"/>
    <property type="evidence" value="ECO:0007669"/>
    <property type="project" value="UniProtKB-KW"/>
</dbReference>
<dbReference type="GO" id="GO:0002250">
    <property type="term" value="P:adaptive immune response"/>
    <property type="evidence" value="ECO:0007669"/>
    <property type="project" value="UniProtKB-KW"/>
</dbReference>
<dbReference type="Gene3D" id="2.60.40.10">
    <property type="entry name" value="Immunoglobulins"/>
    <property type="match status" value="1"/>
</dbReference>
<dbReference type="InterPro" id="IPR007110">
    <property type="entry name" value="Ig-like_dom"/>
</dbReference>
<dbReference type="InterPro" id="IPR036179">
    <property type="entry name" value="Ig-like_dom_sf"/>
</dbReference>
<dbReference type="InterPro" id="IPR013783">
    <property type="entry name" value="Ig-like_fold"/>
</dbReference>
<dbReference type="InterPro" id="IPR013106">
    <property type="entry name" value="Ig_V-set"/>
</dbReference>
<dbReference type="InterPro" id="IPR051896">
    <property type="entry name" value="TCR_alpha_variable"/>
</dbReference>
<dbReference type="PANTHER" id="PTHR19339">
    <property type="entry name" value="T CELL RECEPTOR ALPHA VARIABLE 39"/>
    <property type="match status" value="1"/>
</dbReference>
<dbReference type="PANTHER" id="PTHR19339:SF0">
    <property type="entry name" value="T CELL RECEPTOR ALPHA VARIABLE 41"/>
    <property type="match status" value="1"/>
</dbReference>
<dbReference type="Pfam" id="PF07686">
    <property type="entry name" value="V-set"/>
    <property type="match status" value="1"/>
</dbReference>
<dbReference type="SMART" id="SM00406">
    <property type="entry name" value="IGv"/>
    <property type="match status" value="1"/>
</dbReference>
<dbReference type="SUPFAM" id="SSF48726">
    <property type="entry name" value="Immunoglobulin"/>
    <property type="match status" value="1"/>
</dbReference>
<dbReference type="PROSITE" id="PS50835">
    <property type="entry name" value="IG_LIKE"/>
    <property type="match status" value="1"/>
</dbReference>
<evidence type="ECO:0000255" key="1"/>
<evidence type="ECO:0000255" key="2">
    <source>
        <dbReference type="PROSITE-ProRule" id="PRU00114"/>
    </source>
</evidence>
<evidence type="ECO:0000303" key="3">
    <source>
    </source>
</evidence>
<evidence type="ECO:0000303" key="4">
    <source>
    </source>
</evidence>
<evidence type="ECO:0000303" key="5">
    <source>
    </source>
</evidence>
<evidence type="ECO:0000303" key="6">
    <source>
    </source>
</evidence>
<evidence type="ECO:0000303" key="7">
    <source>
    </source>
</evidence>
<evidence type="ECO:0000303" key="8">
    <source ref="2"/>
</evidence>
<evidence type="ECO:0000305" key="9"/>
<reference key="1">
    <citation type="journal article" date="2003" name="Nature">
        <title>The DNA sequence and analysis of human chromosome 14.</title>
        <authorList>
            <person name="Heilig R."/>
            <person name="Eckenberg R."/>
            <person name="Petit J.-L."/>
            <person name="Fonknechten N."/>
            <person name="Da Silva C."/>
            <person name="Cattolico L."/>
            <person name="Levy M."/>
            <person name="Barbe V."/>
            <person name="De Berardinis V."/>
            <person name="Ureta-Vidal A."/>
            <person name="Pelletier E."/>
            <person name="Vico V."/>
            <person name="Anthouard V."/>
            <person name="Rowen L."/>
            <person name="Madan A."/>
            <person name="Qin S."/>
            <person name="Sun H."/>
            <person name="Du H."/>
            <person name="Pepin K."/>
            <person name="Artiguenave F."/>
            <person name="Robert C."/>
            <person name="Cruaud C."/>
            <person name="Bruels T."/>
            <person name="Jaillon O."/>
            <person name="Friedlander L."/>
            <person name="Samson G."/>
            <person name="Brottier P."/>
            <person name="Cure S."/>
            <person name="Segurens B."/>
            <person name="Aniere F."/>
            <person name="Samain S."/>
            <person name="Crespeau H."/>
            <person name="Abbasi N."/>
            <person name="Aiach N."/>
            <person name="Boscus D."/>
            <person name="Dickhoff R."/>
            <person name="Dors M."/>
            <person name="Dubois I."/>
            <person name="Friedman C."/>
            <person name="Gouyvenoux M."/>
            <person name="James R."/>
            <person name="Madan A."/>
            <person name="Mairey-Estrada B."/>
            <person name="Mangenot S."/>
            <person name="Martins N."/>
            <person name="Menard M."/>
            <person name="Oztas S."/>
            <person name="Ratcliffe A."/>
            <person name="Shaffer T."/>
            <person name="Trask B."/>
            <person name="Vacherie B."/>
            <person name="Bellemere C."/>
            <person name="Belser C."/>
            <person name="Besnard-Gonnet M."/>
            <person name="Bartol-Mavel D."/>
            <person name="Boutard M."/>
            <person name="Briez-Silla S."/>
            <person name="Combette S."/>
            <person name="Dufosse-Laurent V."/>
            <person name="Ferron C."/>
            <person name="Lechaplais C."/>
            <person name="Louesse C."/>
            <person name="Muselet D."/>
            <person name="Magdelenat G."/>
            <person name="Pateau E."/>
            <person name="Petit E."/>
            <person name="Sirvain-Trukniewicz P."/>
            <person name="Trybou A."/>
            <person name="Vega-Czarny N."/>
            <person name="Bataille E."/>
            <person name="Bluet E."/>
            <person name="Bordelais I."/>
            <person name="Dubois M."/>
            <person name="Dumont C."/>
            <person name="Guerin T."/>
            <person name="Haffray S."/>
            <person name="Hammadi R."/>
            <person name="Muanga J."/>
            <person name="Pellouin V."/>
            <person name="Robert D."/>
            <person name="Wunderle E."/>
            <person name="Gauguet G."/>
            <person name="Roy A."/>
            <person name="Sainte-Marthe L."/>
            <person name="Verdier J."/>
            <person name="Verdier-Discala C."/>
            <person name="Hillier L.W."/>
            <person name="Fulton L."/>
            <person name="McPherson J."/>
            <person name="Matsuda F."/>
            <person name="Wilson R."/>
            <person name="Scarpelli C."/>
            <person name="Gyapay G."/>
            <person name="Wincker P."/>
            <person name="Saurin W."/>
            <person name="Quetier F."/>
            <person name="Waterston R."/>
            <person name="Hood L."/>
            <person name="Weissenbach J."/>
        </authorList>
    </citation>
    <scope>NUCLEOTIDE SEQUENCE [LARGE SCALE GENOMIC DNA] (IMGT ALLELE TRAV41*01)</scope>
</reference>
<reference key="2">
    <citation type="book" date="2001" name="The T Cell Receptor FactsBook.">
        <title>The T Cell Receptor FactsBook.</title>
        <editorList>
            <person name="Lefranc M.P."/>
            <person name="Lefranc G."/>
        </editorList>
        <authorList>
            <person name="Lefranc M.P."/>
            <person name="Lefranc G."/>
        </authorList>
    </citation>
    <scope>NOMENCLATURE</scope>
</reference>
<reference key="3">
    <citation type="journal article" date="2004" name="Nat. Rev. Immunol.">
        <title>The many important facets of T-cell repertoire diversity.</title>
        <authorList>
            <person name="Nikolich-Zugich J."/>
            <person name="Slifka M.K."/>
            <person name="Messaoudi I."/>
        </authorList>
    </citation>
    <scope>REVIEW ON T CELL REPERTOIRE DIVERSITY</scope>
</reference>
<reference key="4">
    <citation type="journal article" date="2010" name="Cold Spring Harb. Perspect. Biol.">
        <title>Structural biology of the T-cell receptor: insights into receptor assembly, ligand recognition, and initiation of signaling.</title>
        <authorList>
            <person name="Wucherpfennig K.W."/>
            <person name="Gagnon E."/>
            <person name="Call M.J."/>
            <person name="Huseby E.S."/>
            <person name="Call M.E."/>
        </authorList>
    </citation>
    <scope>REVIEW ON T CELL RECEPTOR-CD3 COMPLEX ASSEMBLY</scope>
    <scope>SUBCELLULAR LOCATION</scope>
</reference>
<reference key="5">
    <citation type="journal article" date="2013" name="Nat. Rev. Immunol.">
        <title>T cell receptor signalling networks: branched, diversified and bounded.</title>
        <authorList>
            <person name="Brownlie R.J."/>
            <person name="Zamoyska R."/>
        </authorList>
    </citation>
    <scope>REVIEW ON T CELL RECEPTOR SIGNALING</scope>
</reference>
<reference key="6">
    <citation type="journal article" date="2014" name="Front. Immunol.">
        <title>Immunoglobulin and T Cell Receptor Genes: IMGT((R)) and the Birth and Rise of Immunoinformatics.</title>
        <authorList>
            <person name="Lefranc M.P."/>
        </authorList>
    </citation>
    <scope>NOMENCLATURE</scope>
</reference>
<reference key="7">
    <citation type="journal article" date="2015" name="Annu. Rev. Immunol.">
        <title>T cell antigen receptor recognition of antigen-presenting molecules.</title>
        <authorList>
            <person name="Rossjohn J."/>
            <person name="Gras S."/>
            <person name="Miles J.J."/>
            <person name="Turner S.J."/>
            <person name="Godfrey D.I."/>
            <person name="McCluskey J."/>
        </authorList>
    </citation>
    <scope>REVIEW ON FUNCTION</scope>
</reference>
<organism>
    <name type="scientific">Homo sapiens</name>
    <name type="common">Human</name>
    <dbReference type="NCBI Taxonomy" id="9606"/>
    <lineage>
        <taxon>Eukaryota</taxon>
        <taxon>Metazoa</taxon>
        <taxon>Chordata</taxon>
        <taxon>Craniata</taxon>
        <taxon>Vertebrata</taxon>
        <taxon>Euteleostomi</taxon>
        <taxon>Mammalia</taxon>
        <taxon>Eutheria</taxon>
        <taxon>Euarchontoglires</taxon>
        <taxon>Primates</taxon>
        <taxon>Haplorrhini</taxon>
        <taxon>Catarrhini</taxon>
        <taxon>Hominidae</taxon>
        <taxon>Homo</taxon>
    </lineage>
</organism>
<accession>A0A0B4J266</accession>
<feature type="signal peptide" evidence="1">
    <location>
        <begin position="1"/>
        <end position="21"/>
    </location>
</feature>
<feature type="chain" id="PRO_5002094090" description="T cell receptor alpha variable 41" evidence="1">
    <location>
        <begin position="22"/>
        <end position="112"/>
    </location>
</feature>
<feature type="domain" description="Ig-like" evidence="2">
    <location>
        <begin position="24"/>
        <end position="112" status="greater than"/>
    </location>
</feature>
<feature type="glycosylation site" description="N-linked (GlcNAc...) asparagine" evidence="1">
    <location>
        <position position="32"/>
    </location>
</feature>
<feature type="glycosylation site" description="N-linked (GlcNAc...) asparagine" evidence="1">
    <location>
        <position position="44"/>
    </location>
</feature>
<feature type="disulfide bond" evidence="2">
    <location>
        <begin position="45"/>
        <end position="109"/>
    </location>
</feature>
<feature type="non-terminal residue">
    <location>
        <position position="112"/>
    </location>
</feature>
<name>TVA41_HUMAN</name>
<proteinExistence type="evidence at protein level"/>
<keyword id="KW-1064">Adaptive immunity</keyword>
<keyword id="KW-1003">Cell membrane</keyword>
<keyword id="KW-1015">Disulfide bond</keyword>
<keyword id="KW-0325">Glycoprotein</keyword>
<keyword id="KW-0391">Immunity</keyword>
<keyword id="KW-0393">Immunoglobulin domain</keyword>
<keyword id="KW-0472">Membrane</keyword>
<keyword id="KW-1267">Proteomics identification</keyword>
<keyword id="KW-0675">Receptor</keyword>
<keyword id="KW-1185">Reference proteome</keyword>
<keyword id="KW-0732">Signal</keyword>
<keyword id="KW-1279">T cell receptor</keyword>